<keyword id="KW-0067">ATP-binding</keyword>
<keyword id="KW-0436">Ligase</keyword>
<keyword id="KW-0547">Nucleotide-binding</keyword>
<keyword id="KW-0658">Purine biosynthesis</keyword>
<keyword id="KW-1185">Reference proteome</keyword>
<sequence>MMNPSKRKLLYSGKVKSMYETDEPGFLIAEFRDDTTAFDGEKHEKLARKGVINNQINAHIMQALKDAGILTHFESVLSPNESLVRRLKMIPLECVVRNIAAGSLCRRLGIESGLRLNPPLYELFLKNDALHDPMINENHALSFGWATQAQLDRMKELSFKINNVLFALFSNVNLILVDAKYEFGVSNDEIYLGDEISPDSCRIWDAKTKEPLDKDRFRKDMGRVVESYEEIAHRFQIKLS</sequence>
<organism>
    <name type="scientific">Coxiella burnetii (strain RSA 493 / Nine Mile phase I)</name>
    <dbReference type="NCBI Taxonomy" id="227377"/>
    <lineage>
        <taxon>Bacteria</taxon>
        <taxon>Pseudomonadati</taxon>
        <taxon>Pseudomonadota</taxon>
        <taxon>Gammaproteobacteria</taxon>
        <taxon>Legionellales</taxon>
        <taxon>Coxiellaceae</taxon>
        <taxon>Coxiella</taxon>
    </lineage>
</organism>
<evidence type="ECO:0000255" key="1">
    <source>
        <dbReference type="HAMAP-Rule" id="MF_00137"/>
    </source>
</evidence>
<proteinExistence type="inferred from homology"/>
<comment type="catalytic activity">
    <reaction evidence="1">
        <text>5-amino-1-(5-phospho-D-ribosyl)imidazole-4-carboxylate + L-aspartate + ATP = (2S)-2-[5-amino-1-(5-phospho-beta-D-ribosyl)imidazole-4-carboxamido]succinate + ADP + phosphate + 2 H(+)</text>
        <dbReference type="Rhea" id="RHEA:22628"/>
        <dbReference type="ChEBI" id="CHEBI:15378"/>
        <dbReference type="ChEBI" id="CHEBI:29991"/>
        <dbReference type="ChEBI" id="CHEBI:30616"/>
        <dbReference type="ChEBI" id="CHEBI:43474"/>
        <dbReference type="ChEBI" id="CHEBI:58443"/>
        <dbReference type="ChEBI" id="CHEBI:77657"/>
        <dbReference type="ChEBI" id="CHEBI:456216"/>
        <dbReference type="EC" id="6.3.2.6"/>
    </reaction>
</comment>
<comment type="pathway">
    <text evidence="1">Purine metabolism; IMP biosynthesis via de novo pathway; 5-amino-1-(5-phospho-D-ribosyl)imidazole-4-carboxamide from 5-amino-1-(5-phospho-D-ribosyl)imidazole-4-carboxylate: step 1/2.</text>
</comment>
<comment type="similarity">
    <text evidence="1">Belongs to the SAICAR synthetase family.</text>
</comment>
<name>PUR7_COXBU</name>
<feature type="chain" id="PRO_0000100823" description="Phosphoribosylaminoimidazole-succinocarboxamide synthase">
    <location>
        <begin position="1"/>
        <end position="240"/>
    </location>
</feature>
<dbReference type="EC" id="6.3.2.6" evidence="1"/>
<dbReference type="EMBL" id="AE016828">
    <property type="protein sequence ID" value="AAO90729.1"/>
    <property type="molecule type" value="Genomic_DNA"/>
</dbReference>
<dbReference type="RefSeq" id="NP_820215.1">
    <property type="nucleotide sequence ID" value="NC_002971.4"/>
</dbReference>
<dbReference type="RefSeq" id="WP_010958082.1">
    <property type="nucleotide sequence ID" value="NZ_CCYB01000032.1"/>
</dbReference>
<dbReference type="SMR" id="Q83CA8"/>
<dbReference type="STRING" id="227377.CBU_1220"/>
<dbReference type="DNASU" id="1209125"/>
<dbReference type="EnsemblBacteria" id="AAO90729">
    <property type="protein sequence ID" value="AAO90729"/>
    <property type="gene ID" value="CBU_1220"/>
</dbReference>
<dbReference type="GeneID" id="1209125"/>
<dbReference type="KEGG" id="cbu:CBU_1220"/>
<dbReference type="PATRIC" id="fig|227377.7.peg.1213"/>
<dbReference type="eggNOG" id="COG0152">
    <property type="taxonomic scope" value="Bacteria"/>
</dbReference>
<dbReference type="HOGENOM" id="CLU_061495_2_0_6"/>
<dbReference type="OrthoDB" id="9801549at2"/>
<dbReference type="UniPathway" id="UPA00074">
    <property type="reaction ID" value="UER00131"/>
</dbReference>
<dbReference type="Proteomes" id="UP000002671">
    <property type="component" value="Chromosome"/>
</dbReference>
<dbReference type="GO" id="GO:0005829">
    <property type="term" value="C:cytosol"/>
    <property type="evidence" value="ECO:0000318"/>
    <property type="project" value="GO_Central"/>
</dbReference>
<dbReference type="GO" id="GO:0005524">
    <property type="term" value="F:ATP binding"/>
    <property type="evidence" value="ECO:0007669"/>
    <property type="project" value="UniProtKB-KW"/>
</dbReference>
<dbReference type="GO" id="GO:0004639">
    <property type="term" value="F:phosphoribosylaminoimidazolesuccinocarboxamide synthase activity"/>
    <property type="evidence" value="ECO:0000318"/>
    <property type="project" value="GO_Central"/>
</dbReference>
<dbReference type="GO" id="GO:0006189">
    <property type="term" value="P:'de novo' IMP biosynthetic process"/>
    <property type="evidence" value="ECO:0007669"/>
    <property type="project" value="UniProtKB-UniRule"/>
</dbReference>
<dbReference type="GO" id="GO:0009236">
    <property type="term" value="P:cobalamin biosynthetic process"/>
    <property type="evidence" value="ECO:0007669"/>
    <property type="project" value="InterPro"/>
</dbReference>
<dbReference type="CDD" id="cd01415">
    <property type="entry name" value="SAICAR_synt_PurC"/>
    <property type="match status" value="1"/>
</dbReference>
<dbReference type="FunFam" id="3.30.200.20:FF:000086">
    <property type="entry name" value="Phosphoribosylaminoimidazole-succinocarboxamide synthase"/>
    <property type="match status" value="1"/>
</dbReference>
<dbReference type="FunFam" id="3.30.470.20:FF:000006">
    <property type="entry name" value="Phosphoribosylaminoimidazole-succinocarboxamide synthase"/>
    <property type="match status" value="1"/>
</dbReference>
<dbReference type="Gene3D" id="3.30.470.20">
    <property type="entry name" value="ATP-grasp fold, B domain"/>
    <property type="match status" value="1"/>
</dbReference>
<dbReference type="Gene3D" id="3.30.200.20">
    <property type="entry name" value="Phosphorylase Kinase, domain 1"/>
    <property type="match status" value="1"/>
</dbReference>
<dbReference type="HAMAP" id="MF_00137">
    <property type="entry name" value="SAICAR_synth"/>
    <property type="match status" value="1"/>
</dbReference>
<dbReference type="InterPro" id="IPR028923">
    <property type="entry name" value="SAICAR_synt/ADE2_N"/>
</dbReference>
<dbReference type="InterPro" id="IPR033934">
    <property type="entry name" value="SAICAR_synt_PurC"/>
</dbReference>
<dbReference type="InterPro" id="IPR001636">
    <property type="entry name" value="SAICAR_synth"/>
</dbReference>
<dbReference type="InterPro" id="IPR050089">
    <property type="entry name" value="SAICAR_synthetase"/>
</dbReference>
<dbReference type="InterPro" id="IPR018236">
    <property type="entry name" value="SAICAR_synthetase_CS"/>
</dbReference>
<dbReference type="NCBIfam" id="TIGR00081">
    <property type="entry name" value="purC"/>
    <property type="match status" value="1"/>
</dbReference>
<dbReference type="PANTHER" id="PTHR43599">
    <property type="entry name" value="MULTIFUNCTIONAL PROTEIN ADE2"/>
    <property type="match status" value="1"/>
</dbReference>
<dbReference type="PANTHER" id="PTHR43599:SF3">
    <property type="entry name" value="SI:DKEY-6E2.2"/>
    <property type="match status" value="1"/>
</dbReference>
<dbReference type="Pfam" id="PF01259">
    <property type="entry name" value="SAICAR_synt"/>
    <property type="match status" value="1"/>
</dbReference>
<dbReference type="SUPFAM" id="SSF56104">
    <property type="entry name" value="SAICAR synthase-like"/>
    <property type="match status" value="1"/>
</dbReference>
<dbReference type="PROSITE" id="PS01057">
    <property type="entry name" value="SAICAR_SYNTHETASE_1"/>
    <property type="match status" value="1"/>
</dbReference>
<dbReference type="PROSITE" id="PS01058">
    <property type="entry name" value="SAICAR_SYNTHETASE_2"/>
    <property type="match status" value="1"/>
</dbReference>
<gene>
    <name evidence="1" type="primary">purC</name>
    <name type="ordered locus">CBU_1220</name>
</gene>
<accession>Q83CA8</accession>
<protein>
    <recommendedName>
        <fullName evidence="1">Phosphoribosylaminoimidazole-succinocarboxamide synthase</fullName>
        <ecNumber evidence="1">6.3.2.6</ecNumber>
    </recommendedName>
    <alternativeName>
        <fullName evidence="1">SAICAR synthetase</fullName>
    </alternativeName>
</protein>
<reference key="1">
    <citation type="journal article" date="2003" name="Proc. Natl. Acad. Sci. U.S.A.">
        <title>Complete genome sequence of the Q-fever pathogen, Coxiella burnetii.</title>
        <authorList>
            <person name="Seshadri R."/>
            <person name="Paulsen I.T."/>
            <person name="Eisen J.A."/>
            <person name="Read T.D."/>
            <person name="Nelson K.E."/>
            <person name="Nelson W.C."/>
            <person name="Ward N.L."/>
            <person name="Tettelin H."/>
            <person name="Davidsen T.M."/>
            <person name="Beanan M.J."/>
            <person name="DeBoy R.T."/>
            <person name="Daugherty S.C."/>
            <person name="Brinkac L.M."/>
            <person name="Madupu R."/>
            <person name="Dodson R.J."/>
            <person name="Khouri H.M."/>
            <person name="Lee K.H."/>
            <person name="Carty H.A."/>
            <person name="Scanlan D."/>
            <person name="Heinzen R.A."/>
            <person name="Thompson H.A."/>
            <person name="Samuel J.E."/>
            <person name="Fraser C.M."/>
            <person name="Heidelberg J.F."/>
        </authorList>
    </citation>
    <scope>NUCLEOTIDE SEQUENCE [LARGE SCALE GENOMIC DNA]</scope>
    <source>
        <strain>RSA 493 / Nine Mile phase I</strain>
    </source>
</reference>